<accession>A4TGP0</accession>
<sequence>MKALHFGAGNIGRGFIGKLLADAGAQLTFADVNQPLLDELNKRKRYQVNVVGEQARVEEVKNVSAVNSGSPEVVALIAEADIVTTAVGPQILARIAATVAQGLITRHQQGNTRPLNIIACENMVRGTSQLKQHVFAALSEDEQIWVEQHVGFVDSAVDRIVPPSEAGSTDILAVTVETFSEWIVDGTQFKGQPPEIVGMELTDNLMAFVERKLFTLNTGHAITAYLGQLAGHQTIRDAILDPAVRQTVKGAMEESGAVLIKRYAFDPQKHAAYINKILSRFENPYLHDDVERVGRQPLRKLSAGDRLIKPLLGTLEYQLPHDSLVTGIAAAMSYRSEQDPQAQELVTLLAQLGPKAALAQISGLPADSEVVEQAVSVYNAMQQKLAH</sequence>
<evidence type="ECO:0000255" key="1">
    <source>
        <dbReference type="HAMAP-Rule" id="MF_00196"/>
    </source>
</evidence>
<protein>
    <recommendedName>
        <fullName evidence="1">Mannitol-1-phosphate 5-dehydrogenase</fullName>
        <ecNumber evidence="1">1.1.1.17</ecNumber>
    </recommendedName>
</protein>
<feature type="chain" id="PRO_1000011823" description="Mannitol-1-phosphate 5-dehydrogenase">
    <location>
        <begin position="1"/>
        <end position="387"/>
    </location>
</feature>
<feature type="binding site" evidence="1">
    <location>
        <begin position="3"/>
        <end position="14"/>
    </location>
    <ligand>
        <name>NAD(+)</name>
        <dbReference type="ChEBI" id="CHEBI:57540"/>
    </ligand>
</feature>
<organism>
    <name type="scientific">Yersinia pestis (strain Pestoides F)</name>
    <dbReference type="NCBI Taxonomy" id="386656"/>
    <lineage>
        <taxon>Bacteria</taxon>
        <taxon>Pseudomonadati</taxon>
        <taxon>Pseudomonadota</taxon>
        <taxon>Gammaproteobacteria</taxon>
        <taxon>Enterobacterales</taxon>
        <taxon>Yersiniaceae</taxon>
        <taxon>Yersinia</taxon>
    </lineage>
</organism>
<gene>
    <name evidence="1" type="primary">mtlD</name>
    <name type="ordered locus">YPDSF_0026</name>
</gene>
<name>MTLD_YERPP</name>
<reference key="1">
    <citation type="submission" date="2007-02" db="EMBL/GenBank/DDBJ databases">
        <title>Complete sequence of chromosome of Yersinia pestis Pestoides F.</title>
        <authorList>
            <consortium name="US DOE Joint Genome Institute"/>
            <person name="Copeland A."/>
            <person name="Lucas S."/>
            <person name="Lapidus A."/>
            <person name="Barry K."/>
            <person name="Detter J.C."/>
            <person name="Glavina del Rio T."/>
            <person name="Hammon N."/>
            <person name="Israni S."/>
            <person name="Dalin E."/>
            <person name="Tice H."/>
            <person name="Pitluck S."/>
            <person name="Di Bartolo G."/>
            <person name="Chain P."/>
            <person name="Malfatti S."/>
            <person name="Shin M."/>
            <person name="Vergez L."/>
            <person name="Schmutz J."/>
            <person name="Larimer F."/>
            <person name="Land M."/>
            <person name="Hauser L."/>
            <person name="Worsham P."/>
            <person name="Chu M."/>
            <person name="Bearden S."/>
            <person name="Garcia E."/>
            <person name="Richardson P."/>
        </authorList>
    </citation>
    <scope>NUCLEOTIDE SEQUENCE [LARGE SCALE GENOMIC DNA]</scope>
    <source>
        <strain>Pestoides F</strain>
    </source>
</reference>
<proteinExistence type="inferred from homology"/>
<comment type="catalytic activity">
    <reaction evidence="1">
        <text>D-mannitol 1-phosphate + NAD(+) = beta-D-fructose 6-phosphate + NADH + H(+)</text>
        <dbReference type="Rhea" id="RHEA:19661"/>
        <dbReference type="ChEBI" id="CHEBI:15378"/>
        <dbReference type="ChEBI" id="CHEBI:57540"/>
        <dbReference type="ChEBI" id="CHEBI:57634"/>
        <dbReference type="ChEBI" id="CHEBI:57945"/>
        <dbReference type="ChEBI" id="CHEBI:61381"/>
        <dbReference type="EC" id="1.1.1.17"/>
    </reaction>
</comment>
<comment type="similarity">
    <text evidence="1">Belongs to the mannitol dehydrogenase family.</text>
</comment>
<dbReference type="EC" id="1.1.1.17" evidence="1"/>
<dbReference type="EMBL" id="CP000668">
    <property type="protein sequence ID" value="ABP38453.1"/>
    <property type="molecule type" value="Genomic_DNA"/>
</dbReference>
<dbReference type="RefSeq" id="WP_002209620.1">
    <property type="nucleotide sequence ID" value="NZ_CP009715.1"/>
</dbReference>
<dbReference type="SMR" id="A4TGP0"/>
<dbReference type="KEGG" id="ypp:YPDSF_0026"/>
<dbReference type="PATRIC" id="fig|386656.14.peg.550"/>
<dbReference type="GO" id="GO:0005829">
    <property type="term" value="C:cytosol"/>
    <property type="evidence" value="ECO:0007669"/>
    <property type="project" value="TreeGrafter"/>
</dbReference>
<dbReference type="GO" id="GO:0008926">
    <property type="term" value="F:mannitol-1-phosphate 5-dehydrogenase activity"/>
    <property type="evidence" value="ECO:0007669"/>
    <property type="project" value="UniProtKB-UniRule"/>
</dbReference>
<dbReference type="GO" id="GO:0019592">
    <property type="term" value="P:mannitol catabolic process"/>
    <property type="evidence" value="ECO:0007669"/>
    <property type="project" value="TreeGrafter"/>
</dbReference>
<dbReference type="FunFam" id="1.10.1040.10:FF:000009">
    <property type="entry name" value="Mannitol-1-phosphate 5-dehydrogenase"/>
    <property type="match status" value="1"/>
</dbReference>
<dbReference type="FunFam" id="3.40.50.720:FF:000075">
    <property type="entry name" value="Mannitol-1-phosphate 5-dehydrogenase"/>
    <property type="match status" value="1"/>
</dbReference>
<dbReference type="Gene3D" id="1.10.1040.10">
    <property type="entry name" value="N-(1-d-carboxylethyl)-l-norvaline Dehydrogenase, domain 2"/>
    <property type="match status" value="1"/>
</dbReference>
<dbReference type="Gene3D" id="3.40.50.720">
    <property type="entry name" value="NAD(P)-binding Rossmann-like Domain"/>
    <property type="match status" value="1"/>
</dbReference>
<dbReference type="HAMAP" id="MF_00196">
    <property type="entry name" value="Mannitol_dehydrog"/>
    <property type="match status" value="1"/>
</dbReference>
<dbReference type="InterPro" id="IPR008927">
    <property type="entry name" value="6-PGluconate_DH-like_C_sf"/>
</dbReference>
<dbReference type="InterPro" id="IPR013328">
    <property type="entry name" value="6PGD_dom2"/>
</dbReference>
<dbReference type="InterPro" id="IPR023028">
    <property type="entry name" value="Mannitol_1_phos_5_DH"/>
</dbReference>
<dbReference type="InterPro" id="IPR000669">
    <property type="entry name" value="Mannitol_DH"/>
</dbReference>
<dbReference type="InterPro" id="IPR013118">
    <property type="entry name" value="Mannitol_DH_C"/>
</dbReference>
<dbReference type="InterPro" id="IPR023027">
    <property type="entry name" value="Mannitol_DH_CS"/>
</dbReference>
<dbReference type="InterPro" id="IPR013131">
    <property type="entry name" value="Mannitol_DH_N"/>
</dbReference>
<dbReference type="InterPro" id="IPR036291">
    <property type="entry name" value="NAD(P)-bd_dom_sf"/>
</dbReference>
<dbReference type="NCBIfam" id="NF002646">
    <property type="entry name" value="PRK02318.1-2"/>
    <property type="match status" value="1"/>
</dbReference>
<dbReference type="NCBIfam" id="NF002647">
    <property type="entry name" value="PRK02318.1-3"/>
    <property type="match status" value="1"/>
</dbReference>
<dbReference type="NCBIfam" id="NF002650">
    <property type="entry name" value="PRK02318.2-2"/>
    <property type="match status" value="1"/>
</dbReference>
<dbReference type="NCBIfam" id="NF002652">
    <property type="entry name" value="PRK02318.2-5"/>
    <property type="match status" value="1"/>
</dbReference>
<dbReference type="PANTHER" id="PTHR30524:SF0">
    <property type="entry name" value="ALTRONATE OXIDOREDUCTASE-RELATED"/>
    <property type="match status" value="1"/>
</dbReference>
<dbReference type="PANTHER" id="PTHR30524">
    <property type="entry name" value="MANNITOL-1-PHOSPHATE 5-DEHYDROGENASE"/>
    <property type="match status" value="1"/>
</dbReference>
<dbReference type="Pfam" id="PF01232">
    <property type="entry name" value="Mannitol_dh"/>
    <property type="match status" value="1"/>
</dbReference>
<dbReference type="Pfam" id="PF08125">
    <property type="entry name" value="Mannitol_dh_C"/>
    <property type="match status" value="1"/>
</dbReference>
<dbReference type="PRINTS" id="PR00084">
    <property type="entry name" value="MTLDHDRGNASE"/>
</dbReference>
<dbReference type="SUPFAM" id="SSF48179">
    <property type="entry name" value="6-phosphogluconate dehydrogenase C-terminal domain-like"/>
    <property type="match status" value="1"/>
</dbReference>
<dbReference type="SUPFAM" id="SSF51735">
    <property type="entry name" value="NAD(P)-binding Rossmann-fold domains"/>
    <property type="match status" value="1"/>
</dbReference>
<dbReference type="PROSITE" id="PS00974">
    <property type="entry name" value="MANNITOL_DHGENASE"/>
    <property type="match status" value="1"/>
</dbReference>
<keyword id="KW-0520">NAD</keyword>
<keyword id="KW-0560">Oxidoreductase</keyword>